<name>Y1533_MYCBO</name>
<comment type="function">
    <text evidence="1">Probable GTPase. May also bind and hydrolyze ATP. May function as chaperone (By similarity).</text>
</comment>
<comment type="subunit">
    <text evidence="1">Homodimer.</text>
</comment>
<comment type="similarity">
    <text evidence="3">Belongs to the SIMIBI class G3E GTPase family. ArgK/MeaB subfamily.</text>
</comment>
<comment type="sequence caution" evidence="2">
    <conflict type="erroneous initiation">
        <sequence resource="EMBL-CDS" id="SIU00136"/>
    </conflict>
    <text>Truncated N-terminus.</text>
</comment>
<organism>
    <name type="scientific">Mycobacterium bovis (strain ATCC BAA-935 / AF2122/97)</name>
    <dbReference type="NCBI Taxonomy" id="233413"/>
    <lineage>
        <taxon>Bacteria</taxon>
        <taxon>Bacillati</taxon>
        <taxon>Actinomycetota</taxon>
        <taxon>Actinomycetes</taxon>
        <taxon>Mycobacteriales</taxon>
        <taxon>Mycobacteriaceae</taxon>
        <taxon>Mycobacterium</taxon>
        <taxon>Mycobacterium tuberculosis complex</taxon>
    </lineage>
</organism>
<sequence length="336" mass="36459">MAMMAASHDDDTVDGLATAVRGGDRAALPRAITLVESTRPDHREQAQQLLLRLLPDSGNAHRVGITGVPGVGKSTAIEALGMHLIERGHRVAVLAVDPSSTRTGGSILGDKTRMARLAVHPNAYIRPSPTSGTLGGVTRATRETVVLLEAAGFDVILIETVGVGQSEVAVANMVDTFVLLTLARTGDQLQGIKKGVLELADIVVVNKADGEHHKEARLAARELSAAIRLIYPREALWRPPVLTMSAVEGRGLAELWDTVERHRQVLTGAGEFDARRRDQQVDWTWQLVRDAVLDRVWSNPTVRKVRSELERRVRAGELTPALAAQQILEIANLTDR</sequence>
<reference key="1">
    <citation type="journal article" date="2003" name="Proc. Natl. Acad. Sci. U.S.A.">
        <title>The complete genome sequence of Mycobacterium bovis.</title>
        <authorList>
            <person name="Garnier T."/>
            <person name="Eiglmeier K."/>
            <person name="Camus J.-C."/>
            <person name="Medina N."/>
            <person name="Mansoor H."/>
            <person name="Pryor M."/>
            <person name="Duthoy S."/>
            <person name="Grondin S."/>
            <person name="Lacroix C."/>
            <person name="Monsempe C."/>
            <person name="Simon S."/>
            <person name="Harris B."/>
            <person name="Atkin R."/>
            <person name="Doggett J."/>
            <person name="Mayes R."/>
            <person name="Keating L."/>
            <person name="Wheeler P.R."/>
            <person name="Parkhill J."/>
            <person name="Barrell B.G."/>
            <person name="Cole S.T."/>
            <person name="Gordon S.V."/>
            <person name="Hewinson R.G."/>
        </authorList>
    </citation>
    <scope>NUCLEOTIDE SEQUENCE [LARGE SCALE GENOMIC DNA]</scope>
    <source>
        <strain>ATCC BAA-935 / AF2122/97</strain>
    </source>
</reference>
<reference key="2">
    <citation type="journal article" date="2017" name="Genome Announc.">
        <title>Updated reference genome sequence and annotation of Mycobacterium bovis AF2122/97.</title>
        <authorList>
            <person name="Malone K.M."/>
            <person name="Farrell D."/>
            <person name="Stuber T.P."/>
            <person name="Schubert O.T."/>
            <person name="Aebersold R."/>
            <person name="Robbe-Austerman S."/>
            <person name="Gordon S.V."/>
        </authorList>
    </citation>
    <scope>NUCLEOTIDE SEQUENCE [LARGE SCALE GENOMIC DNA]</scope>
    <scope>GENOME REANNOTATION</scope>
    <source>
        <strain>ATCC BAA-935 / AF2122/97</strain>
    </source>
</reference>
<proteinExistence type="inferred from homology"/>
<accession>P63578</accession>
<accession>A0A1R3XYX5</accession>
<accession>P71777</accession>
<accession>X2BI73</accession>
<gene>
    <name type="ordered locus">BQ2027_MB1533</name>
</gene>
<feature type="chain" id="PRO_0000157818" description="Probable GTPase Mb1533">
    <location>
        <begin position="1"/>
        <end position="336"/>
    </location>
</feature>
<feature type="binding site" evidence="1">
    <location>
        <begin position="67"/>
        <end position="75"/>
    </location>
    <ligand>
        <name>GTP</name>
        <dbReference type="ChEBI" id="CHEBI:37565"/>
    </ligand>
</feature>
<feature type="binding site" evidence="1">
    <location>
        <position position="209"/>
    </location>
    <ligand>
        <name>GTP</name>
        <dbReference type="ChEBI" id="CHEBI:37565"/>
    </ligand>
</feature>
<feature type="binding site" evidence="1">
    <location>
        <begin position="245"/>
        <end position="247"/>
    </location>
    <ligand>
        <name>GTP</name>
        <dbReference type="ChEBI" id="CHEBI:37565"/>
    </ligand>
</feature>
<keyword id="KW-0067">ATP-binding</keyword>
<keyword id="KW-0143">Chaperone</keyword>
<keyword id="KW-0342">GTP-binding</keyword>
<keyword id="KW-0378">Hydrolase</keyword>
<keyword id="KW-0547">Nucleotide-binding</keyword>
<keyword id="KW-1185">Reference proteome</keyword>
<evidence type="ECO:0000250" key="1"/>
<evidence type="ECO:0000250" key="2">
    <source>
        <dbReference type="UniProtKB" id="P9WPZ1"/>
    </source>
</evidence>
<evidence type="ECO:0000305" key="3"/>
<dbReference type="EC" id="3.6.-.-"/>
<dbReference type="EMBL" id="LT708304">
    <property type="protein sequence ID" value="SIU00136.1"/>
    <property type="status" value="ALT_INIT"/>
    <property type="molecule type" value="Genomic_DNA"/>
</dbReference>
<dbReference type="RefSeq" id="NP_855185.1">
    <property type="nucleotide sequence ID" value="NC_002945.3"/>
</dbReference>
<dbReference type="SMR" id="P63578"/>
<dbReference type="KEGG" id="mbo:BQ2027_MB1533"/>
<dbReference type="PATRIC" id="fig|233413.5.peg.1675"/>
<dbReference type="Proteomes" id="UP000001419">
    <property type="component" value="Chromosome"/>
</dbReference>
<dbReference type="GO" id="GO:0005737">
    <property type="term" value="C:cytoplasm"/>
    <property type="evidence" value="ECO:0007669"/>
    <property type="project" value="TreeGrafter"/>
</dbReference>
<dbReference type="GO" id="GO:0005524">
    <property type="term" value="F:ATP binding"/>
    <property type="evidence" value="ECO:0007669"/>
    <property type="project" value="UniProtKB-KW"/>
</dbReference>
<dbReference type="GO" id="GO:0005525">
    <property type="term" value="F:GTP binding"/>
    <property type="evidence" value="ECO:0007669"/>
    <property type="project" value="UniProtKB-KW"/>
</dbReference>
<dbReference type="GO" id="GO:0003924">
    <property type="term" value="F:GTPase activity"/>
    <property type="evidence" value="ECO:0007669"/>
    <property type="project" value="InterPro"/>
</dbReference>
<dbReference type="CDD" id="cd03114">
    <property type="entry name" value="MMAA-like"/>
    <property type="match status" value="1"/>
</dbReference>
<dbReference type="Gene3D" id="1.10.287.130">
    <property type="match status" value="1"/>
</dbReference>
<dbReference type="Gene3D" id="1.20.5.170">
    <property type="match status" value="1"/>
</dbReference>
<dbReference type="Gene3D" id="3.40.50.300">
    <property type="entry name" value="P-loop containing nucleotide triphosphate hydrolases"/>
    <property type="match status" value="1"/>
</dbReference>
<dbReference type="InterPro" id="IPR005129">
    <property type="entry name" value="GTPase_ArgK"/>
</dbReference>
<dbReference type="InterPro" id="IPR027417">
    <property type="entry name" value="P-loop_NTPase"/>
</dbReference>
<dbReference type="NCBIfam" id="TIGR00750">
    <property type="entry name" value="lao"/>
    <property type="match status" value="1"/>
</dbReference>
<dbReference type="NCBIfam" id="NF006958">
    <property type="entry name" value="PRK09435.1"/>
    <property type="match status" value="1"/>
</dbReference>
<dbReference type="PANTHER" id="PTHR23408:SF3">
    <property type="entry name" value="METHYLMALONIC ACIDURIA TYPE A PROTEIN, MITOCHONDRIAL"/>
    <property type="match status" value="1"/>
</dbReference>
<dbReference type="PANTHER" id="PTHR23408">
    <property type="entry name" value="METHYLMALONYL-COA MUTASE"/>
    <property type="match status" value="1"/>
</dbReference>
<dbReference type="Pfam" id="PF03308">
    <property type="entry name" value="MeaB"/>
    <property type="match status" value="1"/>
</dbReference>
<dbReference type="SUPFAM" id="SSF52540">
    <property type="entry name" value="P-loop containing nucleoside triphosphate hydrolases"/>
    <property type="match status" value="1"/>
</dbReference>
<protein>
    <recommendedName>
        <fullName>Probable GTPase Mb1533</fullName>
        <ecNumber>3.6.-.-</ecNumber>
    </recommendedName>
</protein>